<organism>
    <name type="scientific">Thermosynechococcus vestitus (strain NIES-2133 / IAM M-273 / BP-1)</name>
    <dbReference type="NCBI Taxonomy" id="197221"/>
    <lineage>
        <taxon>Bacteria</taxon>
        <taxon>Bacillati</taxon>
        <taxon>Cyanobacteriota</taxon>
        <taxon>Cyanophyceae</taxon>
        <taxon>Acaryochloridales</taxon>
        <taxon>Thermosynechococcaceae</taxon>
        <taxon>Thermosynechococcus</taxon>
    </lineage>
</organism>
<accession>Q8DJK4</accession>
<evidence type="ECO:0000255" key="1">
    <source>
        <dbReference type="HAMAP-Rule" id="MF_00418"/>
    </source>
</evidence>
<evidence type="ECO:0000305" key="2"/>
<proteinExistence type="inferred from homology"/>
<comment type="function">
    <text evidence="1">Catalyzes the condensation of (S)-aspartate-beta-semialdehyde [(S)-ASA] and pyruvate to 4-hydroxy-tetrahydrodipicolinate (HTPA).</text>
</comment>
<comment type="catalytic activity">
    <reaction evidence="1">
        <text>L-aspartate 4-semialdehyde + pyruvate = (2S,4S)-4-hydroxy-2,3,4,5-tetrahydrodipicolinate + H2O + H(+)</text>
        <dbReference type="Rhea" id="RHEA:34171"/>
        <dbReference type="ChEBI" id="CHEBI:15361"/>
        <dbReference type="ChEBI" id="CHEBI:15377"/>
        <dbReference type="ChEBI" id="CHEBI:15378"/>
        <dbReference type="ChEBI" id="CHEBI:67139"/>
        <dbReference type="ChEBI" id="CHEBI:537519"/>
        <dbReference type="EC" id="4.3.3.7"/>
    </reaction>
</comment>
<comment type="pathway">
    <text evidence="1">Amino-acid biosynthesis; L-lysine biosynthesis via DAP pathway; (S)-tetrahydrodipicolinate from L-aspartate: step 3/4.</text>
</comment>
<comment type="subunit">
    <text evidence="1">Homotetramer; dimer of dimers.</text>
</comment>
<comment type="subcellular location">
    <subcellularLocation>
        <location evidence="1">Cytoplasm</location>
    </subcellularLocation>
</comment>
<comment type="similarity">
    <text evidence="1">Belongs to the DapA family.</text>
</comment>
<comment type="caution">
    <text evidence="2">Was originally thought to be a dihydrodipicolinate synthase (DHDPS), catalyzing the condensation of (S)-aspartate-beta-semialdehyde [(S)-ASA] and pyruvate to dihydrodipicolinate (DHDP). However, it was shown in E.coli that the product of the enzymatic reaction is not dihydrodipicolinate but in fact (4S)-4-hydroxy-2,3,4,5-tetrahydro-(2S)-dipicolinic acid (HTPA), and that the consecutive dehydration reaction leading to DHDP is not spontaneous but catalyzed by DapB.</text>
</comment>
<protein>
    <recommendedName>
        <fullName evidence="1">4-hydroxy-tetrahydrodipicolinate synthase</fullName>
        <shortName evidence="1">HTPA synthase</shortName>
        <ecNumber evidence="1">4.3.3.7</ecNumber>
    </recommendedName>
</protein>
<sequence>MTDFGRVITAMITPFTADGAIAYDVAAKLAQHLVANGSDGIVVCGTTGESPTLTWEEEFQLFQTVQQAVAGKAKIIAGTGSNSTREAIDATAKAAELGLDGALLVVPYYNKPPQEGLYAHFQAIAKAVPDFPLMLYNIPGRTGQNLLPETVIRLAEYPNIVAIKEASGSLDQASTLRAALPPTFRIYAGDDSLTLPLLAVGGYGVVSVASHLVGLRIQEMIQAFVQGDTAKATAIHCQLLPLFKALFVTTNPIPIKAALSLQGWSVGEPRLPLTSASDAVISQLKAVLDDLGLLKS</sequence>
<gene>
    <name evidence="1" type="primary">dapA</name>
    <name type="ordered locus">tlr1219</name>
</gene>
<feature type="chain" id="PRO_0000103171" description="4-hydroxy-tetrahydrodipicolinate synthase">
    <location>
        <begin position="1"/>
        <end position="296"/>
    </location>
</feature>
<feature type="active site" description="Proton donor/acceptor" evidence="1">
    <location>
        <position position="136"/>
    </location>
</feature>
<feature type="active site" description="Schiff-base intermediate with substrate" evidence="1">
    <location>
        <position position="164"/>
    </location>
</feature>
<feature type="binding site" evidence="1">
    <location>
        <position position="47"/>
    </location>
    <ligand>
        <name>pyruvate</name>
        <dbReference type="ChEBI" id="CHEBI:15361"/>
    </ligand>
</feature>
<feature type="binding site" evidence="1">
    <location>
        <position position="206"/>
    </location>
    <ligand>
        <name>pyruvate</name>
        <dbReference type="ChEBI" id="CHEBI:15361"/>
    </ligand>
</feature>
<feature type="site" description="Part of a proton relay during catalysis" evidence="1">
    <location>
        <position position="46"/>
    </location>
</feature>
<feature type="site" description="Part of a proton relay during catalysis" evidence="1">
    <location>
        <position position="109"/>
    </location>
</feature>
<name>DAPA_THEVB</name>
<reference key="1">
    <citation type="journal article" date="2002" name="DNA Res.">
        <title>Complete genome structure of the thermophilic cyanobacterium Thermosynechococcus elongatus BP-1.</title>
        <authorList>
            <person name="Nakamura Y."/>
            <person name="Kaneko T."/>
            <person name="Sato S."/>
            <person name="Ikeuchi M."/>
            <person name="Katoh H."/>
            <person name="Sasamoto S."/>
            <person name="Watanabe A."/>
            <person name="Iriguchi M."/>
            <person name="Kawashima K."/>
            <person name="Kimura T."/>
            <person name="Kishida Y."/>
            <person name="Kiyokawa C."/>
            <person name="Kohara M."/>
            <person name="Matsumoto M."/>
            <person name="Matsuno A."/>
            <person name="Nakazaki N."/>
            <person name="Shimpo S."/>
            <person name="Sugimoto M."/>
            <person name="Takeuchi C."/>
            <person name="Yamada M."/>
            <person name="Tabata S."/>
        </authorList>
    </citation>
    <scope>NUCLEOTIDE SEQUENCE [LARGE SCALE GENOMIC DNA]</scope>
    <source>
        <strain>NIES-2133 / IAM M-273 / BP-1</strain>
    </source>
</reference>
<keyword id="KW-0028">Amino-acid biosynthesis</keyword>
<keyword id="KW-0963">Cytoplasm</keyword>
<keyword id="KW-0220">Diaminopimelate biosynthesis</keyword>
<keyword id="KW-0456">Lyase</keyword>
<keyword id="KW-0457">Lysine biosynthesis</keyword>
<keyword id="KW-1185">Reference proteome</keyword>
<keyword id="KW-0704">Schiff base</keyword>
<dbReference type="EC" id="4.3.3.7" evidence="1"/>
<dbReference type="EMBL" id="BA000039">
    <property type="protein sequence ID" value="BAC08771.1"/>
    <property type="molecule type" value="Genomic_DNA"/>
</dbReference>
<dbReference type="RefSeq" id="NP_682009.1">
    <property type="nucleotide sequence ID" value="NC_004113.1"/>
</dbReference>
<dbReference type="RefSeq" id="WP_011057061.1">
    <property type="nucleotide sequence ID" value="NC_004113.1"/>
</dbReference>
<dbReference type="SMR" id="Q8DJK4"/>
<dbReference type="STRING" id="197221.gene:10747815"/>
<dbReference type="EnsemblBacteria" id="BAC08771">
    <property type="protein sequence ID" value="BAC08771"/>
    <property type="gene ID" value="BAC08771"/>
</dbReference>
<dbReference type="KEGG" id="tel:tlr1219"/>
<dbReference type="PATRIC" id="fig|197221.4.peg.1283"/>
<dbReference type="eggNOG" id="COG0329">
    <property type="taxonomic scope" value="Bacteria"/>
</dbReference>
<dbReference type="UniPathway" id="UPA00034">
    <property type="reaction ID" value="UER00017"/>
</dbReference>
<dbReference type="Proteomes" id="UP000000440">
    <property type="component" value="Chromosome"/>
</dbReference>
<dbReference type="GO" id="GO:0005829">
    <property type="term" value="C:cytosol"/>
    <property type="evidence" value="ECO:0007669"/>
    <property type="project" value="TreeGrafter"/>
</dbReference>
<dbReference type="GO" id="GO:0008840">
    <property type="term" value="F:4-hydroxy-tetrahydrodipicolinate synthase activity"/>
    <property type="evidence" value="ECO:0007669"/>
    <property type="project" value="UniProtKB-UniRule"/>
</dbReference>
<dbReference type="GO" id="GO:0019877">
    <property type="term" value="P:diaminopimelate biosynthetic process"/>
    <property type="evidence" value="ECO:0007669"/>
    <property type="project" value="UniProtKB-UniRule"/>
</dbReference>
<dbReference type="GO" id="GO:0009089">
    <property type="term" value="P:lysine biosynthetic process via diaminopimelate"/>
    <property type="evidence" value="ECO:0007669"/>
    <property type="project" value="UniProtKB-UniRule"/>
</dbReference>
<dbReference type="CDD" id="cd00950">
    <property type="entry name" value="DHDPS"/>
    <property type="match status" value="1"/>
</dbReference>
<dbReference type="Gene3D" id="3.20.20.70">
    <property type="entry name" value="Aldolase class I"/>
    <property type="match status" value="1"/>
</dbReference>
<dbReference type="HAMAP" id="MF_00418">
    <property type="entry name" value="DapA"/>
    <property type="match status" value="1"/>
</dbReference>
<dbReference type="InterPro" id="IPR013785">
    <property type="entry name" value="Aldolase_TIM"/>
</dbReference>
<dbReference type="InterPro" id="IPR005263">
    <property type="entry name" value="DapA"/>
</dbReference>
<dbReference type="InterPro" id="IPR002220">
    <property type="entry name" value="DapA-like"/>
</dbReference>
<dbReference type="InterPro" id="IPR020625">
    <property type="entry name" value="Schiff_base-form_aldolases_AS"/>
</dbReference>
<dbReference type="InterPro" id="IPR020624">
    <property type="entry name" value="Schiff_base-form_aldolases_CS"/>
</dbReference>
<dbReference type="NCBIfam" id="TIGR00674">
    <property type="entry name" value="dapA"/>
    <property type="match status" value="1"/>
</dbReference>
<dbReference type="PANTHER" id="PTHR12128:SF66">
    <property type="entry name" value="4-HYDROXY-2-OXOGLUTARATE ALDOLASE, MITOCHONDRIAL"/>
    <property type="match status" value="1"/>
</dbReference>
<dbReference type="PANTHER" id="PTHR12128">
    <property type="entry name" value="DIHYDRODIPICOLINATE SYNTHASE"/>
    <property type="match status" value="1"/>
</dbReference>
<dbReference type="Pfam" id="PF00701">
    <property type="entry name" value="DHDPS"/>
    <property type="match status" value="1"/>
</dbReference>
<dbReference type="PIRSF" id="PIRSF001365">
    <property type="entry name" value="DHDPS"/>
    <property type="match status" value="1"/>
</dbReference>
<dbReference type="PRINTS" id="PR00146">
    <property type="entry name" value="DHPICSNTHASE"/>
</dbReference>
<dbReference type="SMART" id="SM01130">
    <property type="entry name" value="DHDPS"/>
    <property type="match status" value="1"/>
</dbReference>
<dbReference type="SUPFAM" id="SSF51569">
    <property type="entry name" value="Aldolase"/>
    <property type="match status" value="1"/>
</dbReference>
<dbReference type="PROSITE" id="PS00665">
    <property type="entry name" value="DHDPS_1"/>
    <property type="match status" value="1"/>
</dbReference>
<dbReference type="PROSITE" id="PS00666">
    <property type="entry name" value="DHDPS_2"/>
    <property type="match status" value="1"/>
</dbReference>